<reference key="1">
    <citation type="journal article" date="2007" name="Nat. Biotechnol.">
        <title>Comparative analysis of the complete genome sequence of the plant growth-promoting bacterium Bacillus amyloliquefaciens FZB42.</title>
        <authorList>
            <person name="Chen X.H."/>
            <person name="Koumoutsi A."/>
            <person name="Scholz R."/>
            <person name="Eisenreich A."/>
            <person name="Schneider K."/>
            <person name="Heinemeyer I."/>
            <person name="Morgenstern B."/>
            <person name="Voss B."/>
            <person name="Hess W.R."/>
            <person name="Reva O."/>
            <person name="Junge H."/>
            <person name="Voigt B."/>
            <person name="Jungblut P.R."/>
            <person name="Vater J."/>
            <person name="Suessmuth R."/>
            <person name="Liesegang H."/>
            <person name="Strittmatter A."/>
            <person name="Gottschalk G."/>
            <person name="Borriss R."/>
        </authorList>
    </citation>
    <scope>NUCLEOTIDE SEQUENCE [LARGE SCALE GENOMIC DNA]</scope>
    <source>
        <strain>DSM 23117 / BGSC 10A6 / LMG 26770 / FZB42</strain>
    </source>
</reference>
<evidence type="ECO:0000255" key="1">
    <source>
        <dbReference type="HAMAP-Rule" id="MF_00365"/>
    </source>
</evidence>
<keyword id="KW-0067">ATP-binding</keyword>
<keyword id="KW-0963">Cytoplasm</keyword>
<keyword id="KW-0227">DNA damage</keyword>
<keyword id="KW-0234">DNA repair</keyword>
<keyword id="KW-0235">DNA replication</keyword>
<keyword id="KW-0238">DNA-binding</keyword>
<keyword id="KW-0547">Nucleotide-binding</keyword>
<keyword id="KW-0742">SOS response</keyword>
<feature type="chain" id="PRO_1000048503" description="DNA replication and repair protein RecF">
    <location>
        <begin position="1"/>
        <end position="370"/>
    </location>
</feature>
<feature type="binding site" evidence="1">
    <location>
        <begin position="30"/>
        <end position="37"/>
    </location>
    <ligand>
        <name>ATP</name>
        <dbReference type="ChEBI" id="CHEBI:30616"/>
    </ligand>
</feature>
<comment type="function">
    <text evidence="1">The RecF protein is involved in DNA metabolism; it is required for DNA replication and normal SOS inducibility. RecF binds preferentially to single-stranded, linear DNA. It also seems to bind ATP.</text>
</comment>
<comment type="subcellular location">
    <subcellularLocation>
        <location evidence="1">Cytoplasm</location>
    </subcellularLocation>
</comment>
<comment type="similarity">
    <text evidence="1">Belongs to the RecF family.</text>
</comment>
<name>RECF_BACVZ</name>
<protein>
    <recommendedName>
        <fullName evidence="1">DNA replication and repair protein RecF</fullName>
    </recommendedName>
</protein>
<proteinExistence type="inferred from homology"/>
<gene>
    <name evidence="1" type="primary">recF</name>
    <name type="ordered locus">RBAM_000040</name>
</gene>
<dbReference type="EMBL" id="CP000560">
    <property type="protein sequence ID" value="ABS72452.1"/>
    <property type="molecule type" value="Genomic_DNA"/>
</dbReference>
<dbReference type="RefSeq" id="WP_007409910.1">
    <property type="nucleotide sequence ID" value="NC_009725.2"/>
</dbReference>
<dbReference type="SMR" id="A7Z0C6"/>
<dbReference type="GeneID" id="93079142"/>
<dbReference type="KEGG" id="bay:RBAM_000040"/>
<dbReference type="HOGENOM" id="CLU_040267_0_1_9"/>
<dbReference type="Proteomes" id="UP000001120">
    <property type="component" value="Chromosome"/>
</dbReference>
<dbReference type="GO" id="GO:0005737">
    <property type="term" value="C:cytoplasm"/>
    <property type="evidence" value="ECO:0007669"/>
    <property type="project" value="UniProtKB-SubCell"/>
</dbReference>
<dbReference type="GO" id="GO:0005524">
    <property type="term" value="F:ATP binding"/>
    <property type="evidence" value="ECO:0007669"/>
    <property type="project" value="UniProtKB-UniRule"/>
</dbReference>
<dbReference type="GO" id="GO:0003697">
    <property type="term" value="F:single-stranded DNA binding"/>
    <property type="evidence" value="ECO:0007669"/>
    <property type="project" value="UniProtKB-UniRule"/>
</dbReference>
<dbReference type="GO" id="GO:0006260">
    <property type="term" value="P:DNA replication"/>
    <property type="evidence" value="ECO:0007669"/>
    <property type="project" value="UniProtKB-UniRule"/>
</dbReference>
<dbReference type="GO" id="GO:0000731">
    <property type="term" value="P:DNA synthesis involved in DNA repair"/>
    <property type="evidence" value="ECO:0007669"/>
    <property type="project" value="TreeGrafter"/>
</dbReference>
<dbReference type="GO" id="GO:0006302">
    <property type="term" value="P:double-strand break repair"/>
    <property type="evidence" value="ECO:0007669"/>
    <property type="project" value="TreeGrafter"/>
</dbReference>
<dbReference type="GO" id="GO:0009432">
    <property type="term" value="P:SOS response"/>
    <property type="evidence" value="ECO:0007669"/>
    <property type="project" value="UniProtKB-UniRule"/>
</dbReference>
<dbReference type="CDD" id="cd03242">
    <property type="entry name" value="ABC_RecF"/>
    <property type="match status" value="1"/>
</dbReference>
<dbReference type="FunFam" id="1.20.1050.90:FF:000002">
    <property type="entry name" value="DNA replication and repair protein RecF"/>
    <property type="match status" value="1"/>
</dbReference>
<dbReference type="FunFam" id="3.40.50.300:FF:000400">
    <property type="entry name" value="DNA replication and repair protein RecF"/>
    <property type="match status" value="1"/>
</dbReference>
<dbReference type="Gene3D" id="3.40.50.300">
    <property type="entry name" value="P-loop containing nucleotide triphosphate hydrolases"/>
    <property type="match status" value="1"/>
</dbReference>
<dbReference type="Gene3D" id="1.20.1050.90">
    <property type="entry name" value="RecF/RecN/SMC, N-terminal domain"/>
    <property type="match status" value="1"/>
</dbReference>
<dbReference type="HAMAP" id="MF_00365">
    <property type="entry name" value="RecF"/>
    <property type="match status" value="1"/>
</dbReference>
<dbReference type="InterPro" id="IPR001238">
    <property type="entry name" value="DNA-binding_RecF"/>
</dbReference>
<dbReference type="InterPro" id="IPR018078">
    <property type="entry name" value="DNA-binding_RecF_CS"/>
</dbReference>
<dbReference type="InterPro" id="IPR027417">
    <property type="entry name" value="P-loop_NTPase"/>
</dbReference>
<dbReference type="InterPro" id="IPR003395">
    <property type="entry name" value="RecF/RecN/SMC_N"/>
</dbReference>
<dbReference type="InterPro" id="IPR042174">
    <property type="entry name" value="RecF_2"/>
</dbReference>
<dbReference type="NCBIfam" id="TIGR00611">
    <property type="entry name" value="recf"/>
    <property type="match status" value="1"/>
</dbReference>
<dbReference type="PANTHER" id="PTHR32182">
    <property type="entry name" value="DNA REPLICATION AND REPAIR PROTEIN RECF"/>
    <property type="match status" value="1"/>
</dbReference>
<dbReference type="PANTHER" id="PTHR32182:SF0">
    <property type="entry name" value="DNA REPLICATION AND REPAIR PROTEIN RECF"/>
    <property type="match status" value="1"/>
</dbReference>
<dbReference type="Pfam" id="PF02463">
    <property type="entry name" value="SMC_N"/>
    <property type="match status" value="1"/>
</dbReference>
<dbReference type="SUPFAM" id="SSF52540">
    <property type="entry name" value="P-loop containing nucleoside triphosphate hydrolases"/>
    <property type="match status" value="1"/>
</dbReference>
<dbReference type="PROSITE" id="PS00617">
    <property type="entry name" value="RECF_1"/>
    <property type="match status" value="1"/>
</dbReference>
<dbReference type="PROSITE" id="PS00618">
    <property type="entry name" value="RECF_2"/>
    <property type="match status" value="1"/>
</dbReference>
<accession>A7Z0C6</accession>
<organism>
    <name type="scientific">Bacillus velezensis (strain DSM 23117 / BGSC 10A6 / LMG 26770 / FZB42)</name>
    <name type="common">Bacillus amyloliquefaciens subsp. plantarum</name>
    <dbReference type="NCBI Taxonomy" id="326423"/>
    <lineage>
        <taxon>Bacteria</taxon>
        <taxon>Bacillati</taxon>
        <taxon>Bacillota</taxon>
        <taxon>Bacilli</taxon>
        <taxon>Bacillales</taxon>
        <taxon>Bacillaceae</taxon>
        <taxon>Bacillus</taxon>
        <taxon>Bacillus amyloliquefaciens group</taxon>
    </lineage>
</organism>
<sequence>MYIQNLELTSYRNYERAELQFENKVNVIIGENAQGKTNLMEAIYVLSMAKSHRTSNDKELIRWDEDYAKIEGRVMKRNGDIPMQLVISKKGKKGKVNHIEQQKLSQYVGALNTIMFAPEDLNLVKGSPQVRRRFLDMEIGQVSAVYLYDLSLYQKILSQRNHFLKQLQSRKQTDRTMLDVLTDQLIEAAAKVVAKRLQFTAQLEKWAQPIHSGISRGLEELTLKYHTALDVSDPKDLSKIGNSYQESFSKLKEKEIERGVTLFGPHRDDVLFYVNGRDVQTYGSQGQQRTTALSLKLAEIDLIHEEIGEYPILLLDDVLSELDDYRQSHLLHTIQGRVQTFVTTTSVDGIDHDTLHQAGMFRVENGTLVK</sequence>